<gene>
    <name type="primary">Ankrd40</name>
</gene>
<dbReference type="EMBL" id="AL645965">
    <property type="status" value="NOT_ANNOTATED_CDS"/>
    <property type="molecule type" value="Genomic_DNA"/>
</dbReference>
<dbReference type="EMBL" id="BC023133">
    <property type="protein sequence ID" value="AAH23133.1"/>
    <property type="molecule type" value="mRNA"/>
</dbReference>
<dbReference type="EMBL" id="AK017451">
    <property type="protein sequence ID" value="BAB30748.1"/>
    <property type="molecule type" value="mRNA"/>
</dbReference>
<dbReference type="CCDS" id="CCDS25253.2">
    <molecule id="Q5SUE8-1"/>
</dbReference>
<dbReference type="CCDS" id="CCDS36283.1">
    <molecule id="Q5SUE8-3"/>
</dbReference>
<dbReference type="RefSeq" id="NP_082075.2">
    <molecule id="Q5SUE8-1"/>
    <property type="nucleotide sequence ID" value="NM_027799.2"/>
</dbReference>
<dbReference type="RefSeq" id="NP_666136.1">
    <molecule id="Q5SUE8-3"/>
    <property type="nucleotide sequence ID" value="NM_146024.1"/>
</dbReference>
<dbReference type="SMR" id="Q5SUE8"/>
<dbReference type="BioGRID" id="214717">
    <property type="interactions" value="2"/>
</dbReference>
<dbReference type="FunCoup" id="Q5SUE8">
    <property type="interactions" value="94"/>
</dbReference>
<dbReference type="STRING" id="10090.ENSMUSP00000103448"/>
<dbReference type="GlyGen" id="Q5SUE8">
    <property type="glycosylation" value="2 sites, 1 O-linked glycan (2 sites)"/>
</dbReference>
<dbReference type="iPTMnet" id="Q5SUE8"/>
<dbReference type="PhosphoSitePlus" id="Q5SUE8"/>
<dbReference type="jPOST" id="Q5SUE8"/>
<dbReference type="PaxDb" id="10090-ENSMUSP00000103448"/>
<dbReference type="PeptideAtlas" id="Q5SUE8"/>
<dbReference type="ProteomicsDB" id="281877">
    <molecule id="Q5SUE8-1"/>
</dbReference>
<dbReference type="ProteomicsDB" id="281878">
    <molecule id="Q5SUE8-2"/>
</dbReference>
<dbReference type="ProteomicsDB" id="281879">
    <molecule id="Q5SUE8-3"/>
</dbReference>
<dbReference type="Pumba" id="Q5SUE8"/>
<dbReference type="Antibodypedia" id="18157">
    <property type="antibodies" value="123 antibodies from 17 providers"/>
</dbReference>
<dbReference type="DNASU" id="71452"/>
<dbReference type="Ensembl" id="ENSMUST00000021227.6">
    <molecule id="Q5SUE8-3"/>
    <property type="protein sequence ID" value="ENSMUSP00000021227.6"/>
    <property type="gene ID" value="ENSMUSG00000020864.14"/>
</dbReference>
<dbReference type="Ensembl" id="ENSMUST00000051221.13">
    <molecule id="Q5SUE8-2"/>
    <property type="protein sequence ID" value="ENSMUSP00000061637.7"/>
    <property type="gene ID" value="ENSMUSG00000020864.14"/>
</dbReference>
<dbReference type="Ensembl" id="ENSMUST00000107818.9">
    <molecule id="Q5SUE8-1"/>
    <property type="protein sequence ID" value="ENSMUSP00000103448.3"/>
    <property type="gene ID" value="ENSMUSG00000020864.14"/>
</dbReference>
<dbReference type="GeneID" id="71452"/>
<dbReference type="KEGG" id="mmu:71452"/>
<dbReference type="UCSC" id="uc007kyk.1">
    <molecule id="Q5SUE8-3"/>
    <property type="organism name" value="mouse"/>
</dbReference>
<dbReference type="UCSC" id="uc007kyl.1">
    <molecule id="Q5SUE8-1"/>
    <property type="organism name" value="mouse"/>
</dbReference>
<dbReference type="AGR" id="MGI:1918702"/>
<dbReference type="CTD" id="91369"/>
<dbReference type="MGI" id="MGI:1918702">
    <property type="gene designation" value="Ankrd40"/>
</dbReference>
<dbReference type="VEuPathDB" id="HostDB:ENSMUSG00000020864"/>
<dbReference type="eggNOG" id="KOG0307">
    <property type="taxonomic scope" value="Eukaryota"/>
</dbReference>
<dbReference type="GeneTree" id="ENSGT00390000007792"/>
<dbReference type="HOGENOM" id="CLU_068367_0_0_1"/>
<dbReference type="InParanoid" id="Q5SUE8"/>
<dbReference type="OMA" id="DYTEDTQ"/>
<dbReference type="OrthoDB" id="194358at2759"/>
<dbReference type="PhylomeDB" id="Q5SUE8"/>
<dbReference type="TreeFam" id="TF331472"/>
<dbReference type="BioGRID-ORCS" id="71452">
    <property type="hits" value="14 hits in 80 CRISPR screens"/>
</dbReference>
<dbReference type="ChiTaRS" id="Ankrd40">
    <property type="organism name" value="mouse"/>
</dbReference>
<dbReference type="PRO" id="PR:Q5SUE8"/>
<dbReference type="Proteomes" id="UP000000589">
    <property type="component" value="Chromosome 11"/>
</dbReference>
<dbReference type="RNAct" id="Q5SUE8">
    <property type="molecule type" value="protein"/>
</dbReference>
<dbReference type="Bgee" id="ENSMUSG00000020864">
    <property type="expression patterns" value="Expressed in hindlimb stylopod muscle and 266 other cell types or tissues"/>
</dbReference>
<dbReference type="ExpressionAtlas" id="Q5SUE8">
    <property type="expression patterns" value="baseline and differential"/>
</dbReference>
<dbReference type="Gene3D" id="1.25.40.20">
    <property type="entry name" value="Ankyrin repeat-containing domain"/>
    <property type="match status" value="1"/>
</dbReference>
<dbReference type="InterPro" id="IPR039195">
    <property type="entry name" value="ANKRD40"/>
</dbReference>
<dbReference type="InterPro" id="IPR002110">
    <property type="entry name" value="Ankyrin_rpt"/>
</dbReference>
<dbReference type="InterPro" id="IPR036770">
    <property type="entry name" value="Ankyrin_rpt-contain_sf"/>
</dbReference>
<dbReference type="PANTHER" id="PTHR24192">
    <property type="entry name" value="ANKYRIN REPEAT DOMAIN 40"/>
    <property type="match status" value="1"/>
</dbReference>
<dbReference type="PANTHER" id="PTHR24192:SF1">
    <property type="entry name" value="ANKYRIN REPEAT DOMAIN-CONTAINING PROTEIN 40"/>
    <property type="match status" value="1"/>
</dbReference>
<dbReference type="Pfam" id="PF13637">
    <property type="entry name" value="Ank_4"/>
    <property type="match status" value="1"/>
</dbReference>
<dbReference type="SMART" id="SM00248">
    <property type="entry name" value="ANK"/>
    <property type="match status" value="2"/>
</dbReference>
<dbReference type="SUPFAM" id="SSF48403">
    <property type="entry name" value="Ankyrin repeat"/>
    <property type="match status" value="1"/>
</dbReference>
<dbReference type="PROSITE" id="PS50297">
    <property type="entry name" value="ANK_REP_REGION"/>
    <property type="match status" value="1"/>
</dbReference>
<dbReference type="PROSITE" id="PS50088">
    <property type="entry name" value="ANK_REPEAT"/>
    <property type="match status" value="1"/>
</dbReference>
<feature type="chain" id="PRO_0000244369" description="Ankyrin repeat domain-containing protein 40">
    <location>
        <begin position="1"/>
        <end position="363"/>
    </location>
</feature>
<feature type="repeat" description="ANK 1">
    <location>
        <begin position="9"/>
        <end position="38"/>
    </location>
</feature>
<feature type="repeat" description="ANK 2">
    <location>
        <begin position="43"/>
        <end position="72"/>
    </location>
</feature>
<feature type="region of interest" description="Disordered" evidence="2">
    <location>
        <begin position="135"/>
        <end position="167"/>
    </location>
</feature>
<feature type="compositionally biased region" description="Pro residues" evidence="2">
    <location>
        <begin position="144"/>
        <end position="164"/>
    </location>
</feature>
<feature type="modified residue" description="N-acetylmethionine" evidence="1">
    <location>
        <position position="1"/>
    </location>
</feature>
<feature type="modified residue" description="Phosphoserine" evidence="6">
    <location>
        <position position="176"/>
    </location>
</feature>
<feature type="splice variant" id="VSP_019554" description="In isoform 3." evidence="4">
    <original>DKDVARLQD</original>
    <variation>IKDEPRPWN</variation>
    <location>
        <begin position="316"/>
        <end position="324"/>
    </location>
</feature>
<feature type="splice variant" id="VSP_019555" description="In isoform 2." evidence="3">
    <original>DKDVARL</original>
    <variation>KRCIHTD</variation>
    <location>
        <begin position="316"/>
        <end position="322"/>
    </location>
</feature>
<feature type="splice variant" id="VSP_019556" description="In isoform 2." evidence="3">
    <location>
        <begin position="323"/>
        <end position="363"/>
    </location>
</feature>
<feature type="splice variant" id="VSP_019557" description="In isoform 3." evidence="4">
    <location>
        <begin position="325"/>
        <end position="363"/>
    </location>
</feature>
<feature type="sequence conflict" description="In Ref. 3; BAB30748." evidence="5" ref="3">
    <original>Q</original>
    <variation>E</variation>
    <location>
        <position position="7"/>
    </location>
</feature>
<feature type="sequence conflict" description="In Ref. 3; BAB30748." evidence="5" ref="3">
    <original>Q</original>
    <variation>E</variation>
    <location>
        <position position="11"/>
    </location>
</feature>
<feature type="sequence conflict" description="In Ref. 3; BAB30748." evidence="5" ref="3">
    <original>N</original>
    <variation>K</variation>
    <location>
        <position position="40"/>
    </location>
</feature>
<name>ANR40_MOUSE</name>
<organism>
    <name type="scientific">Mus musculus</name>
    <name type="common">Mouse</name>
    <dbReference type="NCBI Taxonomy" id="10090"/>
    <lineage>
        <taxon>Eukaryota</taxon>
        <taxon>Metazoa</taxon>
        <taxon>Chordata</taxon>
        <taxon>Craniata</taxon>
        <taxon>Vertebrata</taxon>
        <taxon>Euteleostomi</taxon>
        <taxon>Mammalia</taxon>
        <taxon>Eutheria</taxon>
        <taxon>Euarchontoglires</taxon>
        <taxon>Glires</taxon>
        <taxon>Rodentia</taxon>
        <taxon>Myomorpha</taxon>
        <taxon>Muroidea</taxon>
        <taxon>Muridae</taxon>
        <taxon>Murinae</taxon>
        <taxon>Mus</taxon>
        <taxon>Mus</taxon>
    </lineage>
</organism>
<comment type="alternative products">
    <event type="alternative splicing"/>
    <isoform>
        <id>Q5SUE8-1</id>
        <name>1</name>
        <sequence type="displayed"/>
    </isoform>
    <isoform>
        <id>Q5SUE8-2</id>
        <name>2</name>
        <sequence type="described" ref="VSP_019555 VSP_019556"/>
    </isoform>
    <isoform>
        <id>Q5SUE8-3</id>
        <name>3</name>
        <sequence type="described" ref="VSP_019554 VSP_019557"/>
    </isoform>
</comment>
<proteinExistence type="evidence at protein level"/>
<protein>
    <recommendedName>
        <fullName>Ankyrin repeat domain-containing protein 40</fullName>
    </recommendedName>
</protein>
<keyword id="KW-0007">Acetylation</keyword>
<keyword id="KW-0025">Alternative splicing</keyword>
<keyword id="KW-0040">ANK repeat</keyword>
<keyword id="KW-0597">Phosphoprotein</keyword>
<keyword id="KW-1185">Reference proteome</keyword>
<keyword id="KW-0677">Repeat</keyword>
<evidence type="ECO:0000250" key="1">
    <source>
        <dbReference type="UniProtKB" id="Q6AI12"/>
    </source>
</evidence>
<evidence type="ECO:0000256" key="2">
    <source>
        <dbReference type="SAM" id="MobiDB-lite"/>
    </source>
</evidence>
<evidence type="ECO:0000303" key="3">
    <source>
    </source>
</evidence>
<evidence type="ECO:0000303" key="4">
    <source>
    </source>
</evidence>
<evidence type="ECO:0000305" key="5"/>
<evidence type="ECO:0007744" key="6">
    <source>
    </source>
</evidence>
<accession>Q5SUE8</accession>
<accession>Q5SUF0</accession>
<accession>Q8R595</accession>
<accession>Q9CU71</accession>
<reference key="1">
    <citation type="journal article" date="2009" name="PLoS Biol.">
        <title>Lineage-specific biology revealed by a finished genome assembly of the mouse.</title>
        <authorList>
            <person name="Church D.M."/>
            <person name="Goodstadt L."/>
            <person name="Hillier L.W."/>
            <person name="Zody M.C."/>
            <person name="Goldstein S."/>
            <person name="She X."/>
            <person name="Bult C.J."/>
            <person name="Agarwala R."/>
            <person name="Cherry J.L."/>
            <person name="DiCuccio M."/>
            <person name="Hlavina W."/>
            <person name="Kapustin Y."/>
            <person name="Meric P."/>
            <person name="Maglott D."/>
            <person name="Birtle Z."/>
            <person name="Marques A.C."/>
            <person name="Graves T."/>
            <person name="Zhou S."/>
            <person name="Teague B."/>
            <person name="Potamousis K."/>
            <person name="Churas C."/>
            <person name="Place M."/>
            <person name="Herschleb J."/>
            <person name="Runnheim R."/>
            <person name="Forrest D."/>
            <person name="Amos-Landgraf J."/>
            <person name="Schwartz D.C."/>
            <person name="Cheng Z."/>
            <person name="Lindblad-Toh K."/>
            <person name="Eichler E.E."/>
            <person name="Ponting C.P."/>
        </authorList>
    </citation>
    <scope>NUCLEOTIDE SEQUENCE [LARGE SCALE GENOMIC DNA]</scope>
    <source>
        <strain>C57BL/6J</strain>
    </source>
</reference>
<reference key="2">
    <citation type="journal article" date="2004" name="Genome Res.">
        <title>The status, quality, and expansion of the NIH full-length cDNA project: the Mammalian Gene Collection (MGC).</title>
        <authorList>
            <consortium name="The MGC Project Team"/>
        </authorList>
    </citation>
    <scope>NUCLEOTIDE SEQUENCE [LARGE SCALE MRNA] (ISOFORM 2)</scope>
    <source>
        <strain>FVB/N</strain>
        <tissue>Mammary gland</tissue>
    </source>
</reference>
<reference key="3">
    <citation type="journal article" date="2005" name="Science">
        <title>The transcriptional landscape of the mammalian genome.</title>
        <authorList>
            <person name="Carninci P."/>
            <person name="Kasukawa T."/>
            <person name="Katayama S."/>
            <person name="Gough J."/>
            <person name="Frith M.C."/>
            <person name="Maeda N."/>
            <person name="Oyama R."/>
            <person name="Ravasi T."/>
            <person name="Lenhard B."/>
            <person name="Wells C."/>
            <person name="Kodzius R."/>
            <person name="Shimokawa K."/>
            <person name="Bajic V.B."/>
            <person name="Brenner S.E."/>
            <person name="Batalov S."/>
            <person name="Forrest A.R."/>
            <person name="Zavolan M."/>
            <person name="Davis M.J."/>
            <person name="Wilming L.G."/>
            <person name="Aidinis V."/>
            <person name="Allen J.E."/>
            <person name="Ambesi-Impiombato A."/>
            <person name="Apweiler R."/>
            <person name="Aturaliya R.N."/>
            <person name="Bailey T.L."/>
            <person name="Bansal M."/>
            <person name="Baxter L."/>
            <person name="Beisel K.W."/>
            <person name="Bersano T."/>
            <person name="Bono H."/>
            <person name="Chalk A.M."/>
            <person name="Chiu K.P."/>
            <person name="Choudhary V."/>
            <person name="Christoffels A."/>
            <person name="Clutterbuck D.R."/>
            <person name="Crowe M.L."/>
            <person name="Dalla E."/>
            <person name="Dalrymple B.P."/>
            <person name="de Bono B."/>
            <person name="Della Gatta G."/>
            <person name="di Bernardo D."/>
            <person name="Down T."/>
            <person name="Engstrom P."/>
            <person name="Fagiolini M."/>
            <person name="Faulkner G."/>
            <person name="Fletcher C.F."/>
            <person name="Fukushima T."/>
            <person name="Furuno M."/>
            <person name="Futaki S."/>
            <person name="Gariboldi M."/>
            <person name="Georgii-Hemming P."/>
            <person name="Gingeras T.R."/>
            <person name="Gojobori T."/>
            <person name="Green R.E."/>
            <person name="Gustincich S."/>
            <person name="Harbers M."/>
            <person name="Hayashi Y."/>
            <person name="Hensch T.K."/>
            <person name="Hirokawa N."/>
            <person name="Hill D."/>
            <person name="Huminiecki L."/>
            <person name="Iacono M."/>
            <person name="Ikeo K."/>
            <person name="Iwama A."/>
            <person name="Ishikawa T."/>
            <person name="Jakt M."/>
            <person name="Kanapin A."/>
            <person name="Katoh M."/>
            <person name="Kawasawa Y."/>
            <person name="Kelso J."/>
            <person name="Kitamura H."/>
            <person name="Kitano H."/>
            <person name="Kollias G."/>
            <person name="Krishnan S.P."/>
            <person name="Kruger A."/>
            <person name="Kummerfeld S.K."/>
            <person name="Kurochkin I.V."/>
            <person name="Lareau L.F."/>
            <person name="Lazarevic D."/>
            <person name="Lipovich L."/>
            <person name="Liu J."/>
            <person name="Liuni S."/>
            <person name="McWilliam S."/>
            <person name="Madan Babu M."/>
            <person name="Madera M."/>
            <person name="Marchionni L."/>
            <person name="Matsuda H."/>
            <person name="Matsuzawa S."/>
            <person name="Miki H."/>
            <person name="Mignone F."/>
            <person name="Miyake S."/>
            <person name="Morris K."/>
            <person name="Mottagui-Tabar S."/>
            <person name="Mulder N."/>
            <person name="Nakano N."/>
            <person name="Nakauchi H."/>
            <person name="Ng P."/>
            <person name="Nilsson R."/>
            <person name="Nishiguchi S."/>
            <person name="Nishikawa S."/>
            <person name="Nori F."/>
            <person name="Ohara O."/>
            <person name="Okazaki Y."/>
            <person name="Orlando V."/>
            <person name="Pang K.C."/>
            <person name="Pavan W.J."/>
            <person name="Pavesi G."/>
            <person name="Pesole G."/>
            <person name="Petrovsky N."/>
            <person name="Piazza S."/>
            <person name="Reed J."/>
            <person name="Reid J.F."/>
            <person name="Ring B.Z."/>
            <person name="Ringwald M."/>
            <person name="Rost B."/>
            <person name="Ruan Y."/>
            <person name="Salzberg S.L."/>
            <person name="Sandelin A."/>
            <person name="Schneider C."/>
            <person name="Schoenbach C."/>
            <person name="Sekiguchi K."/>
            <person name="Semple C.A."/>
            <person name="Seno S."/>
            <person name="Sessa L."/>
            <person name="Sheng Y."/>
            <person name="Shibata Y."/>
            <person name="Shimada H."/>
            <person name="Shimada K."/>
            <person name="Silva D."/>
            <person name="Sinclair B."/>
            <person name="Sperling S."/>
            <person name="Stupka E."/>
            <person name="Sugiura K."/>
            <person name="Sultana R."/>
            <person name="Takenaka Y."/>
            <person name="Taki K."/>
            <person name="Tammoja K."/>
            <person name="Tan S.L."/>
            <person name="Tang S."/>
            <person name="Taylor M.S."/>
            <person name="Tegner J."/>
            <person name="Teichmann S.A."/>
            <person name="Ueda H.R."/>
            <person name="van Nimwegen E."/>
            <person name="Verardo R."/>
            <person name="Wei C.L."/>
            <person name="Yagi K."/>
            <person name="Yamanishi H."/>
            <person name="Zabarovsky E."/>
            <person name="Zhu S."/>
            <person name="Zimmer A."/>
            <person name="Hide W."/>
            <person name="Bult C."/>
            <person name="Grimmond S.M."/>
            <person name="Teasdale R.D."/>
            <person name="Liu E.T."/>
            <person name="Brusic V."/>
            <person name="Quackenbush J."/>
            <person name="Wahlestedt C."/>
            <person name="Mattick J.S."/>
            <person name="Hume D.A."/>
            <person name="Kai C."/>
            <person name="Sasaki D."/>
            <person name="Tomaru Y."/>
            <person name="Fukuda S."/>
            <person name="Kanamori-Katayama M."/>
            <person name="Suzuki M."/>
            <person name="Aoki J."/>
            <person name="Arakawa T."/>
            <person name="Iida J."/>
            <person name="Imamura K."/>
            <person name="Itoh M."/>
            <person name="Kato T."/>
            <person name="Kawaji H."/>
            <person name="Kawagashira N."/>
            <person name="Kawashima T."/>
            <person name="Kojima M."/>
            <person name="Kondo S."/>
            <person name="Konno H."/>
            <person name="Nakano K."/>
            <person name="Ninomiya N."/>
            <person name="Nishio T."/>
            <person name="Okada M."/>
            <person name="Plessy C."/>
            <person name="Shibata K."/>
            <person name="Shiraki T."/>
            <person name="Suzuki S."/>
            <person name="Tagami M."/>
            <person name="Waki K."/>
            <person name="Watahiki A."/>
            <person name="Okamura-Oho Y."/>
            <person name="Suzuki H."/>
            <person name="Kawai J."/>
            <person name="Hayashizaki Y."/>
        </authorList>
    </citation>
    <scope>NUCLEOTIDE SEQUENCE [LARGE SCALE MRNA] OF 7-363 (ISOFORM 3)</scope>
    <source>
        <strain>C57BL/6J</strain>
        <tissue>Head</tissue>
    </source>
</reference>
<reference key="4">
    <citation type="journal article" date="2007" name="Proc. Natl. Acad. Sci. U.S.A.">
        <title>Large-scale phosphorylation analysis of mouse liver.</title>
        <authorList>
            <person name="Villen J."/>
            <person name="Beausoleil S.A."/>
            <person name="Gerber S.A."/>
            <person name="Gygi S.P."/>
        </authorList>
    </citation>
    <scope>IDENTIFICATION BY MASS SPECTROMETRY [LARGE SCALE ANALYSIS]</scope>
    <source>
        <tissue>Liver</tissue>
    </source>
</reference>
<reference key="5">
    <citation type="journal article" date="2010" name="Cell">
        <title>A tissue-specific atlas of mouse protein phosphorylation and expression.</title>
        <authorList>
            <person name="Huttlin E.L."/>
            <person name="Jedrychowski M.P."/>
            <person name="Elias J.E."/>
            <person name="Goswami T."/>
            <person name="Rad R."/>
            <person name="Beausoleil S.A."/>
            <person name="Villen J."/>
            <person name="Haas W."/>
            <person name="Sowa M.E."/>
            <person name="Gygi S.P."/>
        </authorList>
    </citation>
    <scope>PHOSPHORYLATION [LARGE SCALE ANALYSIS] AT SER-176</scope>
    <scope>IDENTIFICATION BY MASS SPECTROMETRY [LARGE SCALE ANALYSIS]</scope>
    <source>
        <tissue>Brown adipose tissue</tissue>
        <tissue>Heart</tissue>
        <tissue>Kidney</tissue>
        <tissue>Lung</tissue>
    </source>
</reference>
<sequence>MSALLEQKEQQERLREAAALGDIREVQKLVESGVDVNSQNEVNGWTCLHWACKRNHGQVVSYLLQSGADREILTTKGEMPVQLTSRREIRKIMGVEEADEEEEIPQLKKESELPFVPNYLANPAFPFIYTPAAEDSTQLQNGGPSPPPVSPPADSSPPLLPPTETPLLGAFPRDHSSLALVQNGDISAPSAILRTPESTKPGPVCQPPVSQNRSLFSVPSKPPVSLEPQNGTYAGPAPAFQPFFFTGAFPFNMQELVLKVRIQNPSLRENDFIEIELDRQELTYQELLRVSCCELGVNPDQVEKIRKLPNTLLRKDKDVARLQDFQELELVLMISDNNFLFRNAASTLTERPCYNRRASKLTY</sequence>